<proteinExistence type="evidence at transcript level"/>
<dbReference type="EMBL" id="BC042253">
    <property type="protein sequence ID" value="AAH42253.1"/>
    <property type="molecule type" value="mRNA"/>
</dbReference>
<dbReference type="RefSeq" id="NP_001080345.1">
    <property type="nucleotide sequence ID" value="NM_001086876.1"/>
</dbReference>
<dbReference type="SMR" id="Q8AVJ0"/>
<dbReference type="BioGRID" id="98279">
    <property type="interactions" value="3"/>
</dbReference>
<dbReference type="IntAct" id="Q8AVJ0">
    <property type="interactions" value="1"/>
</dbReference>
<dbReference type="DNASU" id="380037"/>
<dbReference type="GeneID" id="380037"/>
<dbReference type="KEGG" id="xla:380037"/>
<dbReference type="AGR" id="Xenbase:XB-GENE-493737"/>
<dbReference type="CTD" id="380037"/>
<dbReference type="Xenbase" id="XB-GENE-493737">
    <property type="gene designation" value="eif3l.L"/>
</dbReference>
<dbReference type="OMA" id="INRVTAC"/>
<dbReference type="OrthoDB" id="15082at2759"/>
<dbReference type="Proteomes" id="UP000186698">
    <property type="component" value="Chromosome 4L"/>
</dbReference>
<dbReference type="Bgee" id="380037">
    <property type="expression patterns" value="Expressed in lung and 19 other cell types or tissues"/>
</dbReference>
<dbReference type="GO" id="GO:0016282">
    <property type="term" value="C:eukaryotic 43S preinitiation complex"/>
    <property type="evidence" value="ECO:0007669"/>
    <property type="project" value="UniProtKB-UniRule"/>
</dbReference>
<dbReference type="GO" id="GO:0033290">
    <property type="term" value="C:eukaryotic 48S preinitiation complex"/>
    <property type="evidence" value="ECO:0007669"/>
    <property type="project" value="UniProtKB-UniRule"/>
</dbReference>
<dbReference type="GO" id="GO:0005852">
    <property type="term" value="C:eukaryotic translation initiation factor 3 complex"/>
    <property type="evidence" value="ECO:0000250"/>
    <property type="project" value="UniProtKB"/>
</dbReference>
<dbReference type="GO" id="GO:0003743">
    <property type="term" value="F:translation initiation factor activity"/>
    <property type="evidence" value="ECO:0007669"/>
    <property type="project" value="UniProtKB-UniRule"/>
</dbReference>
<dbReference type="GO" id="GO:0001732">
    <property type="term" value="P:formation of cytoplasmic translation initiation complex"/>
    <property type="evidence" value="ECO:0007669"/>
    <property type="project" value="UniProtKB-UniRule"/>
</dbReference>
<dbReference type="GO" id="GO:0006413">
    <property type="term" value="P:translational initiation"/>
    <property type="evidence" value="ECO:0000250"/>
    <property type="project" value="UniProtKB"/>
</dbReference>
<dbReference type="HAMAP" id="MF_03011">
    <property type="entry name" value="eIF3l"/>
    <property type="match status" value="1"/>
</dbReference>
<dbReference type="InterPro" id="IPR019382">
    <property type="entry name" value="eIF3l"/>
</dbReference>
<dbReference type="InterPro" id="IPR000717">
    <property type="entry name" value="PCI_dom"/>
</dbReference>
<dbReference type="InterPro" id="IPR011990">
    <property type="entry name" value="TPR-like_helical_dom_sf"/>
</dbReference>
<dbReference type="PANTHER" id="PTHR13242">
    <property type="entry name" value="EUKARYOTIC TRANSLATION INITIATION FACTOR 3"/>
    <property type="match status" value="1"/>
</dbReference>
<dbReference type="PANTHER" id="PTHR13242:SF0">
    <property type="entry name" value="EUKARYOTIC TRANSLATION INITIATION FACTOR 3 SUBUNIT L"/>
    <property type="match status" value="1"/>
</dbReference>
<dbReference type="Pfam" id="PF10255">
    <property type="entry name" value="Paf67"/>
    <property type="match status" value="1"/>
</dbReference>
<dbReference type="SUPFAM" id="SSF48452">
    <property type="entry name" value="TPR-like"/>
    <property type="match status" value="1"/>
</dbReference>
<dbReference type="PROSITE" id="PS50250">
    <property type="entry name" value="PCI"/>
    <property type="match status" value="1"/>
</dbReference>
<organism>
    <name type="scientific">Xenopus laevis</name>
    <name type="common">African clawed frog</name>
    <dbReference type="NCBI Taxonomy" id="8355"/>
    <lineage>
        <taxon>Eukaryota</taxon>
        <taxon>Metazoa</taxon>
        <taxon>Chordata</taxon>
        <taxon>Craniata</taxon>
        <taxon>Vertebrata</taxon>
        <taxon>Euteleostomi</taxon>
        <taxon>Amphibia</taxon>
        <taxon>Batrachia</taxon>
        <taxon>Anura</taxon>
        <taxon>Pipoidea</taxon>
        <taxon>Pipidae</taxon>
        <taxon>Xenopodinae</taxon>
        <taxon>Xenopus</taxon>
        <taxon>Xenopus</taxon>
    </lineage>
</organism>
<evidence type="ECO:0000255" key="1">
    <source>
        <dbReference type="HAMAP-Rule" id="MF_03011"/>
    </source>
</evidence>
<evidence type="ECO:0000255" key="2">
    <source>
        <dbReference type="PROSITE-ProRule" id="PRU01185"/>
    </source>
</evidence>
<evidence type="ECO:0000256" key="3">
    <source>
        <dbReference type="SAM" id="MobiDB-lite"/>
    </source>
</evidence>
<name>EIF3L_XENLA</name>
<protein>
    <recommendedName>
        <fullName evidence="1">Eukaryotic translation initiation factor 3 subunit L</fullName>
        <shortName evidence="1">eIF3l</shortName>
    </recommendedName>
    <alternativeName>
        <fullName evidence="1">Eukaryotic translation initiation factor 3 subunit 6-interacting protein</fullName>
    </alternativeName>
    <alternativeName>
        <fullName evidence="1">Eukaryotic translation initiation factor 3 subunit E-interacting protein</fullName>
    </alternativeName>
</protein>
<comment type="function">
    <text evidence="1">Component of the eukaryotic translation initiation factor 3 (eIF-3) complex, which is involved in protein synthesis of a specialized repertoire of mRNAs and, together with other initiation factors, stimulates binding of mRNA and methionyl-tRNAi to the 40S ribosome. The eIF-3 complex specifically targets and initiates translation of a subset of mRNAs involved in cell proliferation.</text>
</comment>
<comment type="subunit">
    <text evidence="1">Component of the eukaryotic translation initiation factor 3 (eIF-3) complex, which is composed of 13 subunits: eif3a, eif3b, eif3c, eif3d, eif3e, eif3f, eif3g, eif3h, eif3i, eif3j, eif3k, eif3l and eif3m.</text>
</comment>
<comment type="subcellular location">
    <subcellularLocation>
        <location evidence="1">Cytoplasm</location>
    </subcellularLocation>
</comment>
<comment type="similarity">
    <text evidence="1">Belongs to the eIF-3 subunit L family.</text>
</comment>
<sequence>MSHAKEDYDSSYDPYSYQADYDGHTGDPKQDLAYERQYEQQTYQVIPEVIKNFIQYFHKTVSDLIDQKVYELQASRVSSDLIDQKVYEIQDIYENSWAKLTERFFKNAPWPEAEAIAPQVGNDAVFLILYKELYYRHIYAKVTGGPTLEQRFESYYNYCNLFNYILNADGPAPLELPNQWLWDIIDEFIYQFQSFSQYRCKTAKKSEEEIEFLRSNPKIWNVHSVLNVLHSLVDKSNINRQLEVYTSGGDPESVAGEYGRHSLYKMLGYFSLVGLLRLHSLLGDYYQAIKVLENIELNKKSMYSRVPECQVTTYYYVGFAYLMMRRYQDSIRVFANILLYIQRTKSMFQRTTYKYEMINKQNEQMHALLSIALTMYPMRIDESIHTQLREKYGDKMLRMQKGDAQIYEELFNYACPKFLSPVVPNYDNVNPNYHKEPYLQQLKVFLDEVQQQAQLSTIRSFLKLYTTMPVAKLAGFLDLPEQEFRIQLLVFKHKMKNLVWTSGISALEGEFQSASEVDFYIDKDMIHIADTKVARRYGDFFIRQIHKFEELNKTLKKMSQKP</sequence>
<keyword id="KW-0963">Cytoplasm</keyword>
<keyword id="KW-0396">Initiation factor</keyword>
<keyword id="KW-0648">Protein biosynthesis</keyword>
<keyword id="KW-1185">Reference proteome</keyword>
<accession>Q8AVJ0</accession>
<feature type="chain" id="PRO_0000297496" description="Eukaryotic translation initiation factor 3 subunit L">
    <location>
        <begin position="1"/>
        <end position="562"/>
    </location>
</feature>
<feature type="domain" description="PCI" evidence="2">
    <location>
        <begin position="329"/>
        <end position="535"/>
    </location>
</feature>
<feature type="region of interest" description="Disordered" evidence="3">
    <location>
        <begin position="1"/>
        <end position="29"/>
    </location>
</feature>
<feature type="compositionally biased region" description="Low complexity" evidence="3">
    <location>
        <begin position="11"/>
        <end position="20"/>
    </location>
</feature>
<reference key="1">
    <citation type="submission" date="2003-01" db="EMBL/GenBank/DDBJ databases">
        <authorList>
            <consortium name="NIH - Xenopus Gene Collection (XGC) project"/>
        </authorList>
    </citation>
    <scope>NUCLEOTIDE SEQUENCE [LARGE SCALE MRNA]</scope>
    <source>
        <tissue>Embryo</tissue>
    </source>
</reference>
<gene>
    <name type="primary">eif3l</name>
    <name type="synonym">eif3eip</name>
    <name type="synonym">eif3s6ip</name>
</gene>